<comment type="function">
    <text evidence="1">F(1)F(0) ATP synthase produces ATP from ADP in the presence of a proton or sodium gradient. F-type ATPases consist of two structural domains, F(1) containing the extramembraneous catalytic core and F(0) containing the membrane proton channel, linked together by a central stalk and a peripheral stalk. During catalysis, ATP synthesis in the catalytic domain of F(1) is coupled via a rotary mechanism of the central stalk subunits to proton translocation.</text>
</comment>
<comment type="function">
    <text evidence="1">This protein is part of the stalk that links CF(0) to CF(1). It either transmits conformational changes from CF(0) to CF(1) or is implicated in proton conduction.</text>
</comment>
<comment type="subunit">
    <text evidence="1">F-type ATPases have 2 components, F(1) - the catalytic core - and F(0) - the membrane proton channel. F(1) has five subunits: alpha(3), beta(3), gamma(1), delta(1), epsilon(1). F(0) has three main subunits: a(1), b(2) and c(10-14). The alpha and beta chains form an alternating ring which encloses part of the gamma chain. F(1) is attached to F(0) by a central stalk formed by the gamma and epsilon chains, while a peripheral stalk is formed by the delta and b chains.</text>
</comment>
<comment type="subcellular location">
    <subcellularLocation>
        <location evidence="1">Cell membrane</location>
        <topology evidence="1">Peripheral membrane protein</topology>
    </subcellularLocation>
</comment>
<comment type="similarity">
    <text evidence="1">Belongs to the ATPase delta chain family.</text>
</comment>
<feature type="chain" id="PRO_0000193467" description="ATP synthase subunit delta">
    <location>
        <begin position="1"/>
        <end position="181"/>
    </location>
</feature>
<feature type="sequence conflict" description="In Ref. 1; CAA45548." evidence="2" ref="1">
    <original>E</original>
    <variation>K</variation>
    <location>
        <position position="101"/>
    </location>
</feature>
<feature type="sequence conflict" description="In Ref. 1; CAA45548." evidence="2" ref="1">
    <original>Q</original>
    <variation>E</variation>
    <location>
        <position position="123"/>
    </location>
</feature>
<feature type="sequence conflict" description="In Ref. 1; CAA45548." evidence="2" ref="1">
    <original>H</original>
    <variation>Y</variation>
    <location>
        <position position="129"/>
    </location>
</feature>
<proteinExistence type="inferred from homology"/>
<name>ATPD_MYCGA</name>
<gene>
    <name evidence="1" type="primary">atpH</name>
    <name type="ordered locus">MYCGA3030</name>
    <name type="ORF">MGA_1170</name>
</gene>
<reference key="1">
    <citation type="journal article" date="1992" name="Biochem. J.">
        <title>Nucleotide sequence, organization and characterization of the atp genes and the encoded subunits of Mycoplasma gallisepticum ATPase.</title>
        <authorList>
            <person name="Rasmussen O.F."/>
            <person name="Shirvan M.H."/>
            <person name="Margalit H."/>
            <person name="Christiansen C."/>
            <person name="Rottem S."/>
        </authorList>
    </citation>
    <scope>NUCLEOTIDE SEQUENCE [GENOMIC DNA]</scope>
    <source>
        <strain>A5969Var.B</strain>
    </source>
</reference>
<reference key="2">
    <citation type="journal article" date="2003" name="Microbiology">
        <title>The complete genome sequence of the avian pathogen Mycoplasma gallisepticum strain R(low).</title>
        <authorList>
            <person name="Papazisi L."/>
            <person name="Gorton T.S."/>
            <person name="Kutish G."/>
            <person name="Markham P.F."/>
            <person name="Browning G.F."/>
            <person name="Nguyen D.K."/>
            <person name="Swartzell S."/>
            <person name="Madan A."/>
            <person name="Mahairas G."/>
            <person name="Geary S.J."/>
        </authorList>
    </citation>
    <scope>NUCLEOTIDE SEQUENCE [LARGE SCALE GENOMIC DNA]</scope>
    <source>
        <strain>R(low / passage 15 / clone 2)</strain>
    </source>
</reference>
<protein>
    <recommendedName>
        <fullName evidence="1">ATP synthase subunit delta</fullName>
    </recommendedName>
    <alternativeName>
        <fullName evidence="1">ATP synthase F(1) sector subunit delta</fullName>
    </alternativeName>
    <alternativeName>
        <fullName evidence="1">F-type ATPase subunit delta</fullName>
        <shortName evidence="1">F-ATPase subunit delta</shortName>
    </alternativeName>
</protein>
<evidence type="ECO:0000255" key="1">
    <source>
        <dbReference type="HAMAP-Rule" id="MF_01416"/>
    </source>
</evidence>
<evidence type="ECO:0000305" key="2"/>
<accession>P33254</accession>
<sequence>MDTNIMGFARALVDLAHEEDKVHLFYDNLKVVFDLVKENQDLMSLMNSQVLSKNQKHEIIDVVFKDHLTQTIVDFLKVVIDNREFFHIKSIIKKFFRMIEEEEHTIFINVVSAHELNDDQKAQLVEKLHKKFASQVKILYQTDPSLIAGIRIQSNDLLIDNSIDGKLKLLKHQLRTFSKEN</sequence>
<dbReference type="EMBL" id="X64256">
    <property type="protein sequence ID" value="CAA45548.1"/>
    <property type="molecule type" value="Genomic_DNA"/>
</dbReference>
<dbReference type="EMBL" id="AE015450">
    <property type="protein sequence ID" value="AAP56653.1"/>
    <property type="molecule type" value="Genomic_DNA"/>
</dbReference>
<dbReference type="PIR" id="S24336">
    <property type="entry name" value="S24336"/>
</dbReference>
<dbReference type="RefSeq" id="WP_011113544.1">
    <property type="nucleotide sequence ID" value="NC_004829.2"/>
</dbReference>
<dbReference type="SMR" id="P33254"/>
<dbReference type="GeneID" id="93510131"/>
<dbReference type="KEGG" id="mga:MGA_1170"/>
<dbReference type="HOGENOM" id="CLU_085114_4_2_14"/>
<dbReference type="OrthoDB" id="400380at2"/>
<dbReference type="Proteomes" id="UP000001418">
    <property type="component" value="Chromosome"/>
</dbReference>
<dbReference type="GO" id="GO:0005886">
    <property type="term" value="C:plasma membrane"/>
    <property type="evidence" value="ECO:0007669"/>
    <property type="project" value="UniProtKB-SubCell"/>
</dbReference>
<dbReference type="GO" id="GO:0045259">
    <property type="term" value="C:proton-transporting ATP synthase complex"/>
    <property type="evidence" value="ECO:0007669"/>
    <property type="project" value="UniProtKB-KW"/>
</dbReference>
<dbReference type="GO" id="GO:0046933">
    <property type="term" value="F:proton-transporting ATP synthase activity, rotational mechanism"/>
    <property type="evidence" value="ECO:0007669"/>
    <property type="project" value="UniProtKB-UniRule"/>
</dbReference>
<dbReference type="Gene3D" id="1.10.520.20">
    <property type="entry name" value="N-terminal domain of the delta subunit of the F1F0-ATP synthase"/>
    <property type="match status" value="1"/>
</dbReference>
<dbReference type="HAMAP" id="MF_01416">
    <property type="entry name" value="ATP_synth_delta_bact"/>
    <property type="match status" value="1"/>
</dbReference>
<dbReference type="InterPro" id="IPR026015">
    <property type="entry name" value="ATP_synth_OSCP/delta_N_sf"/>
</dbReference>
<dbReference type="InterPro" id="IPR020781">
    <property type="entry name" value="ATPase_OSCP/d_CS"/>
</dbReference>
<dbReference type="InterPro" id="IPR000711">
    <property type="entry name" value="ATPase_OSCP/dsu"/>
</dbReference>
<dbReference type="NCBIfam" id="TIGR01145">
    <property type="entry name" value="ATP_synt_delta"/>
    <property type="match status" value="1"/>
</dbReference>
<dbReference type="PANTHER" id="PTHR11910">
    <property type="entry name" value="ATP SYNTHASE DELTA CHAIN"/>
    <property type="match status" value="1"/>
</dbReference>
<dbReference type="Pfam" id="PF00213">
    <property type="entry name" value="OSCP"/>
    <property type="match status" value="1"/>
</dbReference>
<dbReference type="PRINTS" id="PR00125">
    <property type="entry name" value="ATPASEDELTA"/>
</dbReference>
<dbReference type="SUPFAM" id="SSF47928">
    <property type="entry name" value="N-terminal domain of the delta subunit of the F1F0-ATP synthase"/>
    <property type="match status" value="1"/>
</dbReference>
<dbReference type="PROSITE" id="PS00389">
    <property type="entry name" value="ATPASE_DELTA"/>
    <property type="match status" value="1"/>
</dbReference>
<organism>
    <name type="scientific">Mycoplasmoides gallisepticum (strain R(low / passage 15 / clone 2))</name>
    <name type="common">Mycoplasma gallisepticum</name>
    <dbReference type="NCBI Taxonomy" id="710127"/>
    <lineage>
        <taxon>Bacteria</taxon>
        <taxon>Bacillati</taxon>
        <taxon>Mycoplasmatota</taxon>
        <taxon>Mycoplasmoidales</taxon>
        <taxon>Mycoplasmoidaceae</taxon>
        <taxon>Mycoplasmoides</taxon>
    </lineage>
</organism>
<keyword id="KW-0066">ATP synthesis</keyword>
<keyword id="KW-1003">Cell membrane</keyword>
<keyword id="KW-0139">CF(1)</keyword>
<keyword id="KW-0375">Hydrogen ion transport</keyword>
<keyword id="KW-0406">Ion transport</keyword>
<keyword id="KW-0472">Membrane</keyword>
<keyword id="KW-1185">Reference proteome</keyword>
<keyword id="KW-0813">Transport</keyword>